<gene>
    <name type="primary">EXPA1</name>
    <name type="synonym">EXP1</name>
    <name type="ordered locus">At1g69530</name>
    <name type="ORF">F10D13_18</name>
</gene>
<sequence>MALVTFLFIATLGAMTSHVNGYAGGGWVNAHATFYGGGDASGTMGGACGYGNLYSQGYGTNTAALSTALFNNGLSCGACFEIRCQNDGKWCLPGSIVVTATNFCPPNNALPNNAGGWCNPPQQHFDLSQPVFQRIAQYRAGIVPVAYRRVPCVRRGGIRFTINGHSYFNLVLITNVGGAGDVHSAMVKGSRTGWQAMSRNWGQNWQSNSYLNGQSLSFKVTTSDGQTIVSNNVANAGWSFGQTFTGAQLR</sequence>
<keyword id="KW-0025">Alternative splicing</keyword>
<keyword id="KW-0134">Cell wall</keyword>
<keyword id="KW-0961">Cell wall biogenesis/degradation</keyword>
<keyword id="KW-1015">Disulfide bond</keyword>
<keyword id="KW-0472">Membrane</keyword>
<keyword id="KW-1185">Reference proteome</keyword>
<keyword id="KW-0964">Secreted</keyword>
<keyword id="KW-0732">Signal</keyword>
<protein>
    <recommendedName>
        <fullName>Expansin-A1</fullName>
        <shortName>AtEXPA1</shortName>
    </recommendedName>
    <alternativeName>
        <fullName>Alpha-expansin-1</fullName>
        <shortName>At-EXP1</shortName>
        <shortName>AtEx1</shortName>
    </alternativeName>
    <alternativeName>
        <fullName>Ath-ExpAlpha-1.2</fullName>
    </alternativeName>
</protein>
<feature type="signal peptide" evidence="2">
    <location>
        <begin position="1"/>
        <end position="17"/>
    </location>
</feature>
<feature type="chain" id="PRO_0000008682" description="Expansin-A1">
    <location>
        <begin position="18"/>
        <end position="250"/>
    </location>
</feature>
<feature type="domain" description="Expansin-like EG45" evidence="4">
    <location>
        <begin position="45"/>
        <end position="157"/>
    </location>
</feature>
<feature type="domain" description="Expansin-like CBD" evidence="3">
    <location>
        <begin position="167"/>
        <end position="246"/>
    </location>
</feature>
<feature type="disulfide bond" evidence="4">
    <location>
        <begin position="48"/>
        <end position="76"/>
    </location>
</feature>
<feature type="disulfide bond" evidence="4">
    <location>
        <begin position="79"/>
        <end position="152"/>
    </location>
</feature>
<feature type="disulfide bond" evidence="4">
    <location>
        <begin position="84"/>
        <end position="91"/>
    </location>
</feature>
<feature type="sequence conflict" description="In Ref. 4; AAB38070." evidence="6" ref="4">
    <original>AMTSH</original>
    <variation>NSARD</variation>
    <location>
        <begin position="14"/>
        <end position="18"/>
    </location>
</feature>
<organism>
    <name type="scientific">Arabidopsis thaliana</name>
    <name type="common">Mouse-ear cress</name>
    <dbReference type="NCBI Taxonomy" id="3702"/>
    <lineage>
        <taxon>Eukaryota</taxon>
        <taxon>Viridiplantae</taxon>
        <taxon>Streptophyta</taxon>
        <taxon>Embryophyta</taxon>
        <taxon>Tracheophyta</taxon>
        <taxon>Spermatophyta</taxon>
        <taxon>Magnoliopsida</taxon>
        <taxon>eudicotyledons</taxon>
        <taxon>Gunneridae</taxon>
        <taxon>Pentapetalae</taxon>
        <taxon>rosids</taxon>
        <taxon>malvids</taxon>
        <taxon>Brassicales</taxon>
        <taxon>Brassicaceae</taxon>
        <taxon>Camelineae</taxon>
        <taxon>Arabidopsis</taxon>
    </lineage>
</organism>
<name>EXPA1_ARATH</name>
<comment type="function">
    <text evidence="1">Causes loosening and extension of plant cell walls by disrupting non-covalent bonding between cellulose microfibrils and matrix glucans. No enzymatic activity has been found (By similarity).</text>
</comment>
<comment type="subcellular location">
    <subcellularLocation>
        <location>Secreted</location>
        <location>Cell wall</location>
    </subcellularLocation>
    <subcellularLocation>
        <location>Membrane</location>
        <topology>Peripheral membrane protein</topology>
    </subcellularLocation>
</comment>
<comment type="alternative products">
    <event type="alternative splicing"/>
    <isoform>
        <id>Q9C554-1</id>
        <name>1</name>
        <sequence type="displayed"/>
    </isoform>
    <text>A number of isoforms are produced. According to EST sequences.</text>
</comment>
<comment type="tissue specificity">
    <text evidence="5">Expressed in stomatal guard cells and very young vascular bundles throughout the plant.</text>
</comment>
<comment type="similarity">
    <text evidence="6">Belongs to the expansin family. Expansin A subfamily.</text>
</comment>
<comment type="online information" name="EXPANSIN homepage">
    <link uri="https://www.dept.psu.edu/biology/groups/expansins/index.htm"/>
</comment>
<accession>Q9C554</accession>
<accession>Q38863</accession>
<dbReference type="EMBL" id="AC073178">
    <property type="protein sequence ID" value="AAG60095.1"/>
    <property type="molecule type" value="Genomic_DNA"/>
</dbReference>
<dbReference type="EMBL" id="CP002684">
    <property type="protein sequence ID" value="AEE34942.1"/>
    <property type="molecule type" value="Genomic_DNA"/>
</dbReference>
<dbReference type="EMBL" id="CP002684">
    <property type="protein sequence ID" value="AEE34944.1"/>
    <property type="molecule type" value="Genomic_DNA"/>
</dbReference>
<dbReference type="EMBL" id="AF360291">
    <property type="protein sequence ID" value="AAK26001.1"/>
    <property type="molecule type" value="mRNA"/>
</dbReference>
<dbReference type="EMBL" id="AY051047">
    <property type="protein sequence ID" value="AAK93724.1"/>
    <property type="molecule type" value="mRNA"/>
</dbReference>
<dbReference type="EMBL" id="U30476">
    <property type="protein sequence ID" value="AAB38070.1"/>
    <property type="molecule type" value="mRNA"/>
</dbReference>
<dbReference type="PIR" id="T50654">
    <property type="entry name" value="T50654"/>
</dbReference>
<dbReference type="RefSeq" id="NP_177112.1">
    <molecule id="Q9C554-1"/>
    <property type="nucleotide sequence ID" value="NM_105622.2"/>
</dbReference>
<dbReference type="RefSeq" id="NP_849868.1">
    <molecule id="Q9C554-1"/>
    <property type="nucleotide sequence ID" value="NM_179537.5"/>
</dbReference>
<dbReference type="SMR" id="Q9C554"/>
<dbReference type="BioGRID" id="28509">
    <property type="interactions" value="3"/>
</dbReference>
<dbReference type="FunCoup" id="Q9C554">
    <property type="interactions" value="15"/>
</dbReference>
<dbReference type="IntAct" id="Q9C554">
    <property type="interactions" value="2"/>
</dbReference>
<dbReference type="STRING" id="3702.Q9C554"/>
<dbReference type="PaxDb" id="3702-AT1G69530.3"/>
<dbReference type="ProteomicsDB" id="222334">
    <molecule id="Q9C554-1"/>
</dbReference>
<dbReference type="EnsemblPlants" id="AT1G69530.1">
    <molecule id="Q9C554-1"/>
    <property type="protein sequence ID" value="AT1G69530.1"/>
    <property type="gene ID" value="AT1G69530"/>
</dbReference>
<dbReference type="EnsemblPlants" id="AT1G69530.2">
    <molecule id="Q9C554-1"/>
    <property type="protein sequence ID" value="AT1G69530.2"/>
    <property type="gene ID" value="AT1G69530"/>
</dbReference>
<dbReference type="GeneID" id="843288"/>
<dbReference type="Gramene" id="AT1G69530.1">
    <molecule id="Q9C554-1"/>
    <property type="protein sequence ID" value="AT1G69530.1"/>
    <property type="gene ID" value="AT1G69530"/>
</dbReference>
<dbReference type="Gramene" id="AT1G69530.2">
    <molecule id="Q9C554-1"/>
    <property type="protein sequence ID" value="AT1G69530.2"/>
    <property type="gene ID" value="AT1G69530"/>
</dbReference>
<dbReference type="KEGG" id="ath:AT1G69530"/>
<dbReference type="Araport" id="AT1G69530"/>
<dbReference type="TAIR" id="AT1G69530">
    <property type="gene designation" value="EXPA1"/>
</dbReference>
<dbReference type="eggNOG" id="ENOG502QPUJ">
    <property type="taxonomic scope" value="Eukaryota"/>
</dbReference>
<dbReference type="InParanoid" id="Q9C554"/>
<dbReference type="OMA" id="SAGWQAM"/>
<dbReference type="OrthoDB" id="5823761at2759"/>
<dbReference type="PhylomeDB" id="Q9C554"/>
<dbReference type="CD-CODE" id="4299E36E">
    <property type="entry name" value="Nucleolus"/>
</dbReference>
<dbReference type="PRO" id="PR:Q9C554"/>
<dbReference type="Proteomes" id="UP000006548">
    <property type="component" value="Chromosome 1"/>
</dbReference>
<dbReference type="ExpressionAtlas" id="Q9C554">
    <property type="expression patterns" value="baseline and differential"/>
</dbReference>
<dbReference type="GO" id="GO:0005576">
    <property type="term" value="C:extracellular region"/>
    <property type="evidence" value="ECO:0007669"/>
    <property type="project" value="UniProtKB-KW"/>
</dbReference>
<dbReference type="GO" id="GO:0016020">
    <property type="term" value="C:membrane"/>
    <property type="evidence" value="ECO:0007669"/>
    <property type="project" value="UniProtKB-SubCell"/>
</dbReference>
<dbReference type="GO" id="GO:0009653">
    <property type="term" value="P:anatomical structure morphogenesis"/>
    <property type="evidence" value="ECO:0007669"/>
    <property type="project" value="UniProtKB-ARBA"/>
</dbReference>
<dbReference type="GO" id="GO:0009828">
    <property type="term" value="P:plant-type cell wall loosening"/>
    <property type="evidence" value="ECO:0000250"/>
    <property type="project" value="UniProtKB"/>
</dbReference>
<dbReference type="CDD" id="cd22274">
    <property type="entry name" value="DPBB_EXPA_N"/>
    <property type="match status" value="1"/>
</dbReference>
<dbReference type="FunFam" id="2.40.40.10:FF:000001">
    <property type="entry name" value="Expansin"/>
    <property type="match status" value="1"/>
</dbReference>
<dbReference type="FunFam" id="2.60.40.760:FF:000001">
    <property type="entry name" value="Expansin"/>
    <property type="match status" value="1"/>
</dbReference>
<dbReference type="Gene3D" id="2.60.40.760">
    <property type="entry name" value="Expansin, cellulose-binding-like domain"/>
    <property type="match status" value="1"/>
</dbReference>
<dbReference type="Gene3D" id="2.40.40.10">
    <property type="entry name" value="RlpA-like domain"/>
    <property type="match status" value="1"/>
</dbReference>
<dbReference type="InterPro" id="IPR007118">
    <property type="entry name" value="Expan_Lol_pI"/>
</dbReference>
<dbReference type="InterPro" id="IPR002963">
    <property type="entry name" value="Expansin"/>
</dbReference>
<dbReference type="InterPro" id="IPR007112">
    <property type="entry name" value="Expansin/allergen_DPBB_dom"/>
</dbReference>
<dbReference type="InterPro" id="IPR007117">
    <property type="entry name" value="Expansin_CBD"/>
</dbReference>
<dbReference type="InterPro" id="IPR036749">
    <property type="entry name" value="Expansin_CBD_sf"/>
</dbReference>
<dbReference type="InterPro" id="IPR009009">
    <property type="entry name" value="RlpA-like_DPBB"/>
</dbReference>
<dbReference type="InterPro" id="IPR036908">
    <property type="entry name" value="RlpA-like_sf"/>
</dbReference>
<dbReference type="PANTHER" id="PTHR31867">
    <property type="entry name" value="EXPANSIN-A15"/>
    <property type="match status" value="1"/>
</dbReference>
<dbReference type="Pfam" id="PF03330">
    <property type="entry name" value="DPBB_1"/>
    <property type="match status" value="1"/>
</dbReference>
<dbReference type="Pfam" id="PF01357">
    <property type="entry name" value="Expansin_C"/>
    <property type="match status" value="1"/>
</dbReference>
<dbReference type="PRINTS" id="PR01226">
    <property type="entry name" value="EXPANSIN"/>
</dbReference>
<dbReference type="PRINTS" id="PR01225">
    <property type="entry name" value="EXPANSNFAMLY"/>
</dbReference>
<dbReference type="SMART" id="SM00837">
    <property type="entry name" value="DPBB_1"/>
    <property type="match status" value="1"/>
</dbReference>
<dbReference type="SUPFAM" id="SSF50685">
    <property type="entry name" value="Barwin-like endoglucanases"/>
    <property type="match status" value="1"/>
</dbReference>
<dbReference type="SUPFAM" id="SSF49590">
    <property type="entry name" value="PHL pollen allergen"/>
    <property type="match status" value="1"/>
</dbReference>
<dbReference type="PROSITE" id="PS50843">
    <property type="entry name" value="EXPANSIN_CBD"/>
    <property type="match status" value="1"/>
</dbReference>
<dbReference type="PROSITE" id="PS50842">
    <property type="entry name" value="EXPANSIN_EG45"/>
    <property type="match status" value="1"/>
</dbReference>
<evidence type="ECO:0000250" key="1"/>
<evidence type="ECO:0000255" key="2"/>
<evidence type="ECO:0000255" key="3">
    <source>
        <dbReference type="PROSITE-ProRule" id="PRU00078"/>
    </source>
</evidence>
<evidence type="ECO:0000255" key="4">
    <source>
        <dbReference type="PROSITE-ProRule" id="PRU00079"/>
    </source>
</evidence>
<evidence type="ECO:0000269" key="5">
    <source ref="5"/>
</evidence>
<evidence type="ECO:0000305" key="6"/>
<reference key="1">
    <citation type="journal article" date="2000" name="Nature">
        <title>Sequence and analysis of chromosome 1 of the plant Arabidopsis thaliana.</title>
        <authorList>
            <person name="Theologis A."/>
            <person name="Ecker J.R."/>
            <person name="Palm C.J."/>
            <person name="Federspiel N.A."/>
            <person name="Kaul S."/>
            <person name="White O."/>
            <person name="Alonso J."/>
            <person name="Altafi H."/>
            <person name="Araujo R."/>
            <person name="Bowman C.L."/>
            <person name="Brooks S.Y."/>
            <person name="Buehler E."/>
            <person name="Chan A."/>
            <person name="Chao Q."/>
            <person name="Chen H."/>
            <person name="Cheuk R.F."/>
            <person name="Chin C.W."/>
            <person name="Chung M.K."/>
            <person name="Conn L."/>
            <person name="Conway A.B."/>
            <person name="Conway A.R."/>
            <person name="Creasy T.H."/>
            <person name="Dewar K."/>
            <person name="Dunn P."/>
            <person name="Etgu P."/>
            <person name="Feldblyum T.V."/>
            <person name="Feng J.-D."/>
            <person name="Fong B."/>
            <person name="Fujii C.Y."/>
            <person name="Gill J.E."/>
            <person name="Goldsmith A.D."/>
            <person name="Haas B."/>
            <person name="Hansen N.F."/>
            <person name="Hughes B."/>
            <person name="Huizar L."/>
            <person name="Hunter J.L."/>
            <person name="Jenkins J."/>
            <person name="Johnson-Hopson C."/>
            <person name="Khan S."/>
            <person name="Khaykin E."/>
            <person name="Kim C.J."/>
            <person name="Koo H.L."/>
            <person name="Kremenetskaia I."/>
            <person name="Kurtz D.B."/>
            <person name="Kwan A."/>
            <person name="Lam B."/>
            <person name="Langin-Hooper S."/>
            <person name="Lee A."/>
            <person name="Lee J.M."/>
            <person name="Lenz C.A."/>
            <person name="Li J.H."/>
            <person name="Li Y.-P."/>
            <person name="Lin X."/>
            <person name="Liu S.X."/>
            <person name="Liu Z.A."/>
            <person name="Luros J.S."/>
            <person name="Maiti R."/>
            <person name="Marziali A."/>
            <person name="Militscher J."/>
            <person name="Miranda M."/>
            <person name="Nguyen M."/>
            <person name="Nierman W.C."/>
            <person name="Osborne B.I."/>
            <person name="Pai G."/>
            <person name="Peterson J."/>
            <person name="Pham P.K."/>
            <person name="Rizzo M."/>
            <person name="Rooney T."/>
            <person name="Rowley D."/>
            <person name="Sakano H."/>
            <person name="Salzberg S.L."/>
            <person name="Schwartz J.R."/>
            <person name="Shinn P."/>
            <person name="Southwick A.M."/>
            <person name="Sun H."/>
            <person name="Tallon L.J."/>
            <person name="Tambunga G."/>
            <person name="Toriumi M.J."/>
            <person name="Town C.D."/>
            <person name="Utterback T."/>
            <person name="Van Aken S."/>
            <person name="Vaysberg M."/>
            <person name="Vysotskaia V.S."/>
            <person name="Walker M."/>
            <person name="Wu D."/>
            <person name="Yu G."/>
            <person name="Fraser C.M."/>
            <person name="Venter J.C."/>
            <person name="Davis R.W."/>
        </authorList>
    </citation>
    <scope>NUCLEOTIDE SEQUENCE [LARGE SCALE GENOMIC DNA]</scope>
    <source>
        <strain>cv. Columbia</strain>
    </source>
</reference>
<reference key="2">
    <citation type="journal article" date="2017" name="Plant J.">
        <title>Araport11: a complete reannotation of the Arabidopsis thaliana reference genome.</title>
        <authorList>
            <person name="Cheng C.Y."/>
            <person name="Krishnakumar V."/>
            <person name="Chan A.P."/>
            <person name="Thibaud-Nissen F."/>
            <person name="Schobel S."/>
            <person name="Town C.D."/>
        </authorList>
    </citation>
    <scope>GENOME REANNOTATION</scope>
    <source>
        <strain>cv. Columbia</strain>
    </source>
</reference>
<reference key="3">
    <citation type="journal article" date="2003" name="Science">
        <title>Empirical analysis of transcriptional activity in the Arabidopsis genome.</title>
        <authorList>
            <person name="Yamada K."/>
            <person name="Lim J."/>
            <person name="Dale J.M."/>
            <person name="Chen H."/>
            <person name="Shinn P."/>
            <person name="Palm C.J."/>
            <person name="Southwick A.M."/>
            <person name="Wu H.C."/>
            <person name="Kim C.J."/>
            <person name="Nguyen M."/>
            <person name="Pham P.K."/>
            <person name="Cheuk R.F."/>
            <person name="Karlin-Newmann G."/>
            <person name="Liu S.X."/>
            <person name="Lam B."/>
            <person name="Sakano H."/>
            <person name="Wu T."/>
            <person name="Yu G."/>
            <person name="Miranda M."/>
            <person name="Quach H.L."/>
            <person name="Tripp M."/>
            <person name="Chang C.H."/>
            <person name="Lee J.M."/>
            <person name="Toriumi M.J."/>
            <person name="Chan M.M."/>
            <person name="Tang C.C."/>
            <person name="Onodera C.S."/>
            <person name="Deng J.M."/>
            <person name="Akiyama K."/>
            <person name="Ansari Y."/>
            <person name="Arakawa T."/>
            <person name="Banh J."/>
            <person name="Banno F."/>
            <person name="Bowser L."/>
            <person name="Brooks S.Y."/>
            <person name="Carninci P."/>
            <person name="Chao Q."/>
            <person name="Choy N."/>
            <person name="Enju A."/>
            <person name="Goldsmith A.D."/>
            <person name="Gurjal M."/>
            <person name="Hansen N.F."/>
            <person name="Hayashizaki Y."/>
            <person name="Johnson-Hopson C."/>
            <person name="Hsuan V.W."/>
            <person name="Iida K."/>
            <person name="Karnes M."/>
            <person name="Khan S."/>
            <person name="Koesema E."/>
            <person name="Ishida J."/>
            <person name="Jiang P.X."/>
            <person name="Jones T."/>
            <person name="Kawai J."/>
            <person name="Kamiya A."/>
            <person name="Meyers C."/>
            <person name="Nakajima M."/>
            <person name="Narusaka M."/>
            <person name="Seki M."/>
            <person name="Sakurai T."/>
            <person name="Satou M."/>
            <person name="Tamse R."/>
            <person name="Vaysberg M."/>
            <person name="Wallender E.K."/>
            <person name="Wong C."/>
            <person name="Yamamura Y."/>
            <person name="Yuan S."/>
            <person name="Shinozaki K."/>
            <person name="Davis R.W."/>
            <person name="Theologis A."/>
            <person name="Ecker J.R."/>
        </authorList>
    </citation>
    <scope>NUCLEOTIDE SEQUENCE [LARGE SCALE MRNA]</scope>
    <source>
        <strain>cv. Columbia</strain>
    </source>
</reference>
<reference key="4">
    <citation type="journal article" date="1995" name="Proc. Natl. Acad. Sci. U.S.A.">
        <title>Molecular cloning and sequence analysis of expansins - a highly conserved, multigene family of proteins that mediate cell wall extension in plants.</title>
        <authorList>
            <person name="Shcherban T.Y."/>
            <person name="Shi J."/>
            <person name="Durachko D.M."/>
            <person name="Guiltinan M.J."/>
            <person name="McQueen-Mason S.J."/>
            <person name="Shieh M."/>
            <person name="Cosgrove D.J."/>
        </authorList>
    </citation>
    <scope>NUCLEOTIDE SEQUENCE [MRNA] OF 14-250</scope>
</reference>
<reference key="5">
    <citation type="book" date="1999" name="Proceedings of Plant Biology '99: The annual meeting of the American Society of Plant Physiologists">
        <title>Expression patterns for selective expansin genes in Arabidopsis.</title>
        <authorList>
            <person name="Durachko D.M."/>
            <person name="Cosgrove D.J."/>
        </authorList>
    </citation>
    <scope>TISSUE SPECIFICITY</scope>
</reference>
<reference key="6">
    <citation type="journal article" date="2004" name="Plant Mol. Biol.">
        <title>Nomenclature for members of the expansin superfamily of genes and proteins.</title>
        <authorList>
            <person name="Kende H."/>
            <person name="Bradford K.J."/>
            <person name="Brummell D.A."/>
            <person name="Cho H.-T."/>
            <person name="Cosgrove D.J."/>
            <person name="Fleming A.J."/>
            <person name="Gehring C."/>
            <person name="Lee Y."/>
            <person name="McQueen-Mason S.J."/>
            <person name="Rose J.K.C."/>
            <person name="Voesenek L.A.C."/>
        </authorList>
    </citation>
    <scope>NOMENCLATURE</scope>
</reference>
<proteinExistence type="evidence at transcript level"/>